<name>RPOA_NICTO</name>
<sequence>MVREKVTVSTRTLKWKCVESRTDSKRLYYGRFILSPLMKGQADTIGIAMRRALLGEIEGTCITRVKSEKVPHEYSTIMGIQESVHEILMNLKEIVLRSNLYGTSDASICVKGPGYVTAQDIILPPYVEIVDNTQHIASLTETIDFCIGLQIKRNRGYLIKTPHNFQDGSYPIDAVFMPVRNANHSIHSYGNGNEKQEILFLEIWTNGSLTPKEALHEASRNLIDLFIPFLHIEEDNLYLQDNQHTVPLSPFTFHDKLAKLIKNKKKIALKSIFIDQSELPSRIYNCLKMSNIYTLLDLLNNSQEDLMKIEHFRSEDVKQILGILEKYFVIDLAKNEF</sequence>
<proteinExistence type="inferred from homology"/>
<accession>Q33C00</accession>
<reference key="1">
    <citation type="journal article" date="2006" name="Mol. Genet. Genomics">
        <title>The chloroplast genome of Nicotiana sylvestris and Nicotiana tomentosiformis: complete sequencing confirms that the Nicotiana sylvestris progenitor is the maternal genome donor of Nicotiana tabacum.</title>
        <authorList>
            <person name="Yukawa M."/>
            <person name="Tsudzuki T."/>
            <person name="Sugiura M."/>
        </authorList>
    </citation>
    <scope>NUCLEOTIDE SEQUENCE [LARGE SCALE GENOMIC DNA]</scope>
</reference>
<gene>
    <name evidence="1" type="primary">rpoA</name>
</gene>
<geneLocation type="chloroplast"/>
<dbReference type="EC" id="2.7.7.6" evidence="1"/>
<dbReference type="EMBL" id="AB240139">
    <property type="protein sequence ID" value="BAE48035.1"/>
    <property type="molecule type" value="Genomic_DNA"/>
</dbReference>
<dbReference type="RefSeq" id="YP_398896.1">
    <property type="nucleotide sequence ID" value="NC_007602.1"/>
</dbReference>
<dbReference type="SMR" id="Q33C00"/>
<dbReference type="GeneID" id="3776300"/>
<dbReference type="KEGG" id="nto:3776300"/>
<dbReference type="OrthoDB" id="1586219at2759"/>
<dbReference type="GO" id="GO:0009507">
    <property type="term" value="C:chloroplast"/>
    <property type="evidence" value="ECO:0007669"/>
    <property type="project" value="UniProtKB-SubCell"/>
</dbReference>
<dbReference type="GO" id="GO:0000428">
    <property type="term" value="C:DNA-directed RNA polymerase complex"/>
    <property type="evidence" value="ECO:0007669"/>
    <property type="project" value="UniProtKB-KW"/>
</dbReference>
<dbReference type="GO" id="GO:0005739">
    <property type="term" value="C:mitochondrion"/>
    <property type="evidence" value="ECO:0007669"/>
    <property type="project" value="GOC"/>
</dbReference>
<dbReference type="GO" id="GO:0003677">
    <property type="term" value="F:DNA binding"/>
    <property type="evidence" value="ECO:0007669"/>
    <property type="project" value="UniProtKB-UniRule"/>
</dbReference>
<dbReference type="GO" id="GO:0003899">
    <property type="term" value="F:DNA-directed RNA polymerase activity"/>
    <property type="evidence" value="ECO:0007669"/>
    <property type="project" value="UniProtKB-UniRule"/>
</dbReference>
<dbReference type="GO" id="GO:0046983">
    <property type="term" value="F:protein dimerization activity"/>
    <property type="evidence" value="ECO:0007669"/>
    <property type="project" value="InterPro"/>
</dbReference>
<dbReference type="GO" id="GO:0006351">
    <property type="term" value="P:DNA-templated transcription"/>
    <property type="evidence" value="ECO:0007669"/>
    <property type="project" value="UniProtKB-UniRule"/>
</dbReference>
<dbReference type="CDD" id="cd06928">
    <property type="entry name" value="RNAP_alpha_NTD"/>
    <property type="match status" value="1"/>
</dbReference>
<dbReference type="FunFam" id="1.10.150.20:FF:000021">
    <property type="entry name" value="DNA-directed RNA polymerase subunit alpha"/>
    <property type="match status" value="1"/>
</dbReference>
<dbReference type="FunFam" id="2.170.120.12:FF:000001">
    <property type="entry name" value="DNA-directed RNA polymerase subunit alpha"/>
    <property type="match status" value="1"/>
</dbReference>
<dbReference type="FunFam" id="3.30.1360.10:FF:000039">
    <property type="entry name" value="DNA-directed RNA polymerase subunit alpha"/>
    <property type="match status" value="1"/>
</dbReference>
<dbReference type="Gene3D" id="1.10.150.20">
    <property type="entry name" value="5' to 3' exonuclease, C-terminal subdomain"/>
    <property type="match status" value="1"/>
</dbReference>
<dbReference type="Gene3D" id="2.170.120.12">
    <property type="entry name" value="DNA-directed RNA polymerase, insert domain"/>
    <property type="match status" value="1"/>
</dbReference>
<dbReference type="Gene3D" id="3.30.1360.10">
    <property type="entry name" value="RNA polymerase, RBP11-like subunit"/>
    <property type="match status" value="1"/>
</dbReference>
<dbReference type="HAMAP" id="MF_00059">
    <property type="entry name" value="RNApol_bact_RpoA"/>
    <property type="match status" value="1"/>
</dbReference>
<dbReference type="InterPro" id="IPR011262">
    <property type="entry name" value="DNA-dir_RNA_pol_insert"/>
</dbReference>
<dbReference type="InterPro" id="IPR011263">
    <property type="entry name" value="DNA-dir_RNA_pol_RpoA/D/Rpb3"/>
</dbReference>
<dbReference type="InterPro" id="IPR011773">
    <property type="entry name" value="DNA-dir_RpoA"/>
</dbReference>
<dbReference type="InterPro" id="IPR036603">
    <property type="entry name" value="RBP11-like"/>
</dbReference>
<dbReference type="InterPro" id="IPR011260">
    <property type="entry name" value="RNAP_asu_C"/>
</dbReference>
<dbReference type="InterPro" id="IPR036643">
    <property type="entry name" value="RNApol_insert_sf"/>
</dbReference>
<dbReference type="NCBIfam" id="TIGR02027">
    <property type="entry name" value="rpoA"/>
    <property type="match status" value="1"/>
</dbReference>
<dbReference type="Pfam" id="PF01000">
    <property type="entry name" value="RNA_pol_A_bac"/>
    <property type="match status" value="1"/>
</dbReference>
<dbReference type="Pfam" id="PF03118">
    <property type="entry name" value="RNA_pol_A_CTD"/>
    <property type="match status" value="1"/>
</dbReference>
<dbReference type="Pfam" id="PF01193">
    <property type="entry name" value="RNA_pol_L"/>
    <property type="match status" value="1"/>
</dbReference>
<dbReference type="SMART" id="SM00662">
    <property type="entry name" value="RPOLD"/>
    <property type="match status" value="1"/>
</dbReference>
<dbReference type="SUPFAM" id="SSF47789">
    <property type="entry name" value="C-terminal domain of RNA polymerase alpha subunit"/>
    <property type="match status" value="1"/>
</dbReference>
<dbReference type="SUPFAM" id="SSF56553">
    <property type="entry name" value="Insert subdomain of RNA polymerase alpha subunit"/>
    <property type="match status" value="1"/>
</dbReference>
<dbReference type="SUPFAM" id="SSF55257">
    <property type="entry name" value="RBP11-like subunits of RNA polymerase"/>
    <property type="match status" value="1"/>
</dbReference>
<organism>
    <name type="scientific">Nicotiana tomentosiformis</name>
    <name type="common">Tobacco</name>
    <dbReference type="NCBI Taxonomy" id="4098"/>
    <lineage>
        <taxon>Eukaryota</taxon>
        <taxon>Viridiplantae</taxon>
        <taxon>Streptophyta</taxon>
        <taxon>Embryophyta</taxon>
        <taxon>Tracheophyta</taxon>
        <taxon>Spermatophyta</taxon>
        <taxon>Magnoliopsida</taxon>
        <taxon>eudicotyledons</taxon>
        <taxon>Gunneridae</taxon>
        <taxon>Pentapetalae</taxon>
        <taxon>asterids</taxon>
        <taxon>lamiids</taxon>
        <taxon>Solanales</taxon>
        <taxon>Solanaceae</taxon>
        <taxon>Nicotianoideae</taxon>
        <taxon>Nicotianeae</taxon>
        <taxon>Nicotiana</taxon>
    </lineage>
</organism>
<evidence type="ECO:0000255" key="1">
    <source>
        <dbReference type="HAMAP-Rule" id="MF_00059"/>
    </source>
</evidence>
<comment type="function">
    <text evidence="1">DNA-dependent RNA polymerase catalyzes the transcription of DNA into RNA using the four ribonucleoside triphosphates as substrates.</text>
</comment>
<comment type="catalytic activity">
    <reaction evidence="1">
        <text>RNA(n) + a ribonucleoside 5'-triphosphate = RNA(n+1) + diphosphate</text>
        <dbReference type="Rhea" id="RHEA:21248"/>
        <dbReference type="Rhea" id="RHEA-COMP:14527"/>
        <dbReference type="Rhea" id="RHEA-COMP:17342"/>
        <dbReference type="ChEBI" id="CHEBI:33019"/>
        <dbReference type="ChEBI" id="CHEBI:61557"/>
        <dbReference type="ChEBI" id="CHEBI:140395"/>
        <dbReference type="EC" id="2.7.7.6"/>
    </reaction>
</comment>
<comment type="subunit">
    <text evidence="1">In plastids the minimal PEP RNA polymerase catalytic core is composed of four subunits: alpha, beta, beta', and beta''. When a (nuclear-encoded) sigma factor is associated with the core the holoenzyme is formed, which can initiate transcription.</text>
</comment>
<comment type="subcellular location">
    <subcellularLocation>
        <location>Plastid</location>
        <location>Chloroplast</location>
    </subcellularLocation>
</comment>
<comment type="domain">
    <text evidence="1">The N-terminal domain is essential for RNAP assembly and basal transcription, whereas the C-terminal domain is involved in interaction with transcriptional regulators and with upstream promoter elements.</text>
</comment>
<comment type="similarity">
    <text evidence="1">Belongs to the RNA polymerase alpha chain family.</text>
</comment>
<feature type="chain" id="PRO_0000225924" description="DNA-directed RNA polymerase subunit alpha">
    <location>
        <begin position="1"/>
        <end position="337"/>
    </location>
</feature>
<feature type="region of interest" description="Alpha N-terminal domain (alpha-NTD)" evidence="1">
    <location>
        <begin position="1"/>
        <end position="233"/>
    </location>
</feature>
<feature type="region of interest" description="Alpha C-terminal domain (alpha-CTD)" evidence="1">
    <location>
        <begin position="265"/>
        <end position="337"/>
    </location>
</feature>
<protein>
    <recommendedName>
        <fullName evidence="1">DNA-directed RNA polymerase subunit alpha</fullName>
        <shortName evidence="1">PEP</shortName>
        <ecNumber evidence="1">2.7.7.6</ecNumber>
    </recommendedName>
    <alternativeName>
        <fullName evidence="1">Plastid-encoded RNA polymerase subunit alpha</fullName>
        <shortName evidence="1">RNA polymerase subunit alpha</shortName>
    </alternativeName>
</protein>
<keyword id="KW-0150">Chloroplast</keyword>
<keyword id="KW-0240">DNA-directed RNA polymerase</keyword>
<keyword id="KW-0548">Nucleotidyltransferase</keyword>
<keyword id="KW-0934">Plastid</keyword>
<keyword id="KW-0804">Transcription</keyword>
<keyword id="KW-0808">Transferase</keyword>